<organismHost>
    <name type="scientific">Spiroplasma melliferum</name>
    <dbReference type="NCBI Taxonomy" id="2134"/>
</organismHost>
<name>ORF7_SPV1C</name>
<keyword id="KW-1043">Host membrane</keyword>
<keyword id="KW-0472">Membrane</keyword>
<keyword id="KW-1185">Reference proteome</keyword>
<keyword id="KW-0812">Transmembrane</keyword>
<keyword id="KW-1133">Transmembrane helix</keyword>
<sequence length="83" mass="9398">MLGMYLTTAFNFLTAPTPKTMTEGMTGIWTGLTSALWKVKEGITNIFPEIMVFLGEAWIILIPFAIFCIIKILNFFRVMVKGF</sequence>
<dbReference type="EMBL" id="U28974">
    <property type="protein sequence ID" value="AAA85015.1"/>
    <property type="molecule type" value="Genomic_DNA"/>
</dbReference>
<dbReference type="RefSeq" id="NP_620629.1">
    <property type="nucleotide sequence ID" value="NC_003793.1"/>
</dbReference>
<dbReference type="SMR" id="Q88422"/>
<dbReference type="KEGG" id="vg:944356"/>
<dbReference type="OrthoDB" id="24609at10239"/>
<dbReference type="Proteomes" id="UP000001764">
    <property type="component" value="Genome"/>
</dbReference>
<dbReference type="GO" id="GO:0033644">
    <property type="term" value="C:host cell membrane"/>
    <property type="evidence" value="ECO:0007669"/>
    <property type="project" value="UniProtKB-SubCell"/>
</dbReference>
<dbReference type="GO" id="GO:0016020">
    <property type="term" value="C:membrane"/>
    <property type="evidence" value="ECO:0007669"/>
    <property type="project" value="UniProtKB-KW"/>
</dbReference>
<reference key="1">
    <citation type="journal article" date="1996" name="Curr. Microbiol.">
        <title>Spiroplasma citri Virus SpV1: Characterization of viral sequences present in the spiroplasmal host chromosome.</title>
        <authorList>
            <person name="Bebear C.M."/>
            <person name="Aullo P."/>
            <person name="Bove J."/>
            <person name="Renaudin J."/>
        </authorList>
    </citation>
    <scope>NUCLEOTIDE SEQUENCE [GENOMIC DNA]</scope>
</reference>
<comment type="subcellular location">
    <subcellularLocation>
        <location evidence="2">Host membrane</location>
        <topology evidence="2">Single-pass membrane protein</topology>
    </subcellularLocation>
</comment>
<comment type="similarity">
    <text evidence="2">Belongs to the plectrovirus ORF7 family.</text>
</comment>
<gene>
    <name type="ORF">ORF7</name>
</gene>
<feature type="chain" id="PRO_0000372080" description="Uncharacterized protein ORF7">
    <location>
        <begin position="1"/>
        <end position="83"/>
    </location>
</feature>
<feature type="transmembrane region" description="Helical" evidence="1">
    <location>
        <begin position="50"/>
        <end position="70"/>
    </location>
</feature>
<organism>
    <name type="scientific">Spiroplasma virus SpV1-C74</name>
    <name type="common">SpV1</name>
    <dbReference type="NCBI Taxonomy" id="185959"/>
    <lineage>
        <taxon>Viruses</taxon>
        <taxon>Monodnaviria</taxon>
        <taxon>Loebvirae</taxon>
        <taxon>Hofneiviricota</taxon>
        <taxon>Faserviricetes</taxon>
        <taxon>Tubulavirales</taxon>
        <taxon>Plectroviridae</taxon>
        <taxon>Vespertiliovirus</taxon>
        <taxon>Vespertiliovirus C74</taxon>
    </lineage>
</organism>
<protein>
    <recommendedName>
        <fullName>Uncharacterized protein ORF7</fullName>
    </recommendedName>
</protein>
<evidence type="ECO:0000255" key="1"/>
<evidence type="ECO:0000305" key="2"/>
<proteinExistence type="inferred from homology"/>
<accession>Q88422</accession>